<proteinExistence type="evidence at protein level"/>
<feature type="signal peptide" evidence="1">
    <location>
        <begin position="1"/>
        <end position="33"/>
    </location>
</feature>
<feature type="chain" id="PRO_0000007750" description="Tenascin-R">
    <location>
        <begin position="34"/>
        <end position="1353"/>
    </location>
</feature>
<feature type="domain" description="EGF-like 1">
    <location>
        <begin position="187"/>
        <end position="198"/>
    </location>
</feature>
<feature type="domain" description="EGF-like 2">
    <location>
        <begin position="234"/>
        <end position="260"/>
    </location>
</feature>
<feature type="domain" description="EGF-like 3">
    <location>
        <begin position="265"/>
        <end position="291"/>
    </location>
</feature>
<feature type="domain" description="EGF-like 4">
    <location>
        <begin position="292"/>
        <end position="323"/>
    </location>
</feature>
<feature type="domain" description="Fibronectin type-III 1" evidence="2">
    <location>
        <begin position="327"/>
        <end position="419"/>
    </location>
</feature>
<feature type="domain" description="Fibronectin type-III 2" evidence="2">
    <location>
        <begin position="420"/>
        <end position="504"/>
    </location>
</feature>
<feature type="domain" description="Fibronectin type-III 3" evidence="2">
    <location>
        <begin position="505"/>
        <end position="594"/>
    </location>
</feature>
<feature type="domain" description="Fibronectin type-III 4" evidence="2">
    <location>
        <begin position="595"/>
        <end position="686"/>
    </location>
</feature>
<feature type="domain" description="Fibronectin type-III 5" evidence="2">
    <location>
        <begin position="687"/>
        <end position="776"/>
    </location>
</feature>
<feature type="domain" description="Fibronectin type-III 6" evidence="2">
    <location>
        <begin position="777"/>
        <end position="863"/>
    </location>
</feature>
<feature type="domain" description="Fibronectin type-III 7" evidence="2">
    <location>
        <begin position="864"/>
        <end position="952"/>
    </location>
</feature>
<feature type="domain" description="Fibronectin type-III 8" evidence="2">
    <location>
        <begin position="953"/>
        <end position="1037"/>
    </location>
</feature>
<feature type="domain" description="Fibronectin type-III 9" evidence="2">
    <location>
        <begin position="1038"/>
        <end position="1126"/>
    </location>
</feature>
<feature type="domain" description="Fibrinogen C-terminal" evidence="3">
    <location>
        <begin position="1124"/>
        <end position="1339"/>
    </location>
</feature>
<feature type="coiled-coil region" evidence="1">
    <location>
        <begin position="132"/>
        <end position="156"/>
    </location>
</feature>
<feature type="glycosylation site" description="N-linked (GlcNAc...) asparagine" evidence="1">
    <location>
        <position position="179"/>
    </location>
</feature>
<feature type="glycosylation site" description="N-linked (GlcNAc...) asparagine" evidence="1">
    <location>
        <position position="197"/>
    </location>
</feature>
<feature type="glycosylation site" description="N-linked (GlcNAc...) asparagine" evidence="1">
    <location>
        <position position="277"/>
    </location>
</feature>
<feature type="glycosylation site" description="N-linked (GlcNAc...) asparagine" evidence="1">
    <location>
        <position position="391"/>
    </location>
</feature>
<feature type="glycosylation site" description="N-linked (GlcNAc...) asparagine" evidence="1">
    <location>
        <position position="469"/>
    </location>
</feature>
<feature type="glycosylation site" description="N-linked (GlcNAc...) asparagine" evidence="1">
    <location>
        <position position="580"/>
    </location>
</feature>
<feature type="glycosylation site" description="N-linked (GlcNAc...) asparagine" evidence="1">
    <location>
        <position position="734"/>
    </location>
</feature>
<feature type="glycosylation site" description="N-linked (GlcNAc...) asparagine" evidence="1">
    <location>
        <position position="790"/>
    </location>
</feature>
<feature type="glycosylation site" description="N-linked (GlcNAc...) asparagine" evidence="1">
    <location>
        <position position="872"/>
    </location>
</feature>
<feature type="glycosylation site" description="N-linked (GlcNAc...) asparagine" evidence="1">
    <location>
        <position position="1031"/>
    </location>
</feature>
<feature type="glycosylation site" description="N-linked (GlcNAc...) asparagine" evidence="1">
    <location>
        <position position="1041"/>
    </location>
</feature>
<feature type="glycosylation site" description="N-linked (GlcNAc...) asparagine" evidence="1">
    <location>
        <position position="1256"/>
    </location>
</feature>
<feature type="glycosylation site" description="N-linked (GlcNAc...) asparagine" evidence="1">
    <location>
        <position position="1342"/>
    </location>
</feature>
<feature type="disulfide bond" evidence="3">
    <location>
        <begin position="296"/>
        <end position="306"/>
    </location>
</feature>
<feature type="disulfide bond" evidence="3">
    <location>
        <begin position="313"/>
        <end position="322"/>
    </location>
</feature>
<feature type="splice variant" id="VSP_012996" description="In isoform 2." evidence="9">
    <location>
        <begin position="90"/>
        <end position="134"/>
    </location>
</feature>
<comment type="function">
    <text evidence="6">Neural extracellular matrix (ECM) protein involved in interactions with different cells and matrix components. Involved in cell attachment and neurite formation. Interaction with CNTN1 enhances the neurite outgrowth.</text>
</comment>
<comment type="subunit">
    <text evidence="4 5 6 7 8">Forms homodimers and homotrimers. Interacts with CNTN1, NFASC and CSPG5.</text>
</comment>
<comment type="subcellular location">
    <subcellularLocation>
        <location>Secreted</location>
        <location>Extracellular space</location>
        <location>Extracellular matrix</location>
    </subcellularLocation>
    <text>May be attach to the cell surface of neural cells.</text>
</comment>
<comment type="alternative products">
    <event type="alternative splicing"/>
    <isoform>
        <id>Q00546-1</id>
        <name>1</name>
        <sequence type="displayed"/>
    </isoform>
    <isoform>
        <id>Q00546-2</id>
        <name>2</name>
        <sequence type="described" ref="VSP_012996"/>
    </isoform>
</comment>
<comment type="tissue specificity">
    <text evidence="5">Brain specific.</text>
</comment>
<comment type="developmental stage">
    <text evidence="5">Expression weakly detectable at 6 dpc embryo, reaches a maximum at 16 dpc and declines in the adult.</text>
</comment>
<comment type="domain">
    <text evidence="4">The N-terminus cysteine-rich segment may mediate the formation of oligomers. The fibronectin type-III 2-3 mediate the binding to contactin 1. The fibronectin type-III 9 mediates the cell attachment. The fibronectin type-III 2-5 mediate NFASC binding. The fibrinogen C-terminal domain mediates interaction with CSPG5.</text>
</comment>
<comment type="similarity">
    <text evidence="10">Belongs to the tenascin family.</text>
</comment>
<keyword id="KW-0025">Alternative splicing</keyword>
<keyword id="KW-0130">Cell adhesion</keyword>
<keyword id="KW-0175">Coiled coil</keyword>
<keyword id="KW-0903">Direct protein sequencing</keyword>
<keyword id="KW-1015">Disulfide bond</keyword>
<keyword id="KW-0245">EGF-like domain</keyword>
<keyword id="KW-0272">Extracellular matrix</keyword>
<keyword id="KW-0325">Glycoprotein</keyword>
<keyword id="KW-1185">Reference proteome</keyword>
<keyword id="KW-0677">Repeat</keyword>
<keyword id="KW-0964">Secreted</keyword>
<keyword id="KW-0732">Signal</keyword>
<reference key="1">
    <citation type="journal article" date="1992" name="Neuron">
        <title>The chicken neural extracellular matrix molecule restrictin: similarity with EGF-, fibronectin type III-, and fibrinogen-like motifs.</title>
        <authorList>
            <person name="Noerenberg U."/>
            <person name="Wille H."/>
            <person name="Wolff J.M."/>
            <person name="Frank R."/>
            <person name="Rathjen F.G."/>
        </authorList>
    </citation>
    <scope>NUCLEOTIDE SEQUENCE [MRNA] (ISOFORMS 1 AND 2)</scope>
    <scope>PROTEIN SEQUENCE OF 579-586 AND 827-840</scope>
    <scope>DEVELOPMENTAL STAGE</scope>
    <scope>SUBUNIT</scope>
    <scope>TISSUE SPECIFICITY</scope>
    <source>
        <tissue>Brain</tissue>
    </source>
</reference>
<reference key="2">
    <citation type="journal article" date="1995" name="J. Cell Biol.">
        <title>Characterization of functional domains of the tenascin-R (restrictin) polypeptide: cell attachment site, binding with F11, and enhancement of F11-mediated neurite outgrowth by tenascin-R.</title>
        <authorList>
            <person name="Noerenberg U."/>
            <person name="Hubert M."/>
            <person name="Bruemmendorf T."/>
            <person name="Tarnok A."/>
            <person name="Rathjen F.G."/>
        </authorList>
    </citation>
    <scope>INTERACTION WITH CNTN1</scope>
    <scope>FUNCTION</scope>
    <scope>CELL ATTACHMENT SITE</scope>
</reference>
<reference key="3">
    <citation type="journal article" date="1998" name="J. Cell Biol.">
        <title>Dissection of complex molecular interactions of neurofascin with axonin-1, F11, and tenascin-R, which promote attachment and neurite formation of tectal cells.</title>
        <authorList>
            <person name="Volkmer H."/>
            <person name="Zacharias U."/>
            <person name="Noerenberg U."/>
            <person name="Rathjen F.G."/>
        </authorList>
    </citation>
    <scope>INTERACTION WITH NFASC</scope>
</reference>
<reference key="4">
    <citation type="journal article" date="1997" name="J. Cell Biol.">
        <title>Chicken acidic leucine-rich EGF-like domain containing brain protein (CALEB), a neural member of the EGF family of differentiation factors, is implicated in neurite formation.</title>
        <authorList>
            <person name="Schumacher S."/>
            <person name="Volkmer H."/>
            <person name="Buck F."/>
            <person name="Otto A."/>
            <person name="Tarnok A."/>
            <person name="Roth S."/>
            <person name="Rathjen F.G."/>
        </authorList>
    </citation>
    <scope>INTERACTION WITH CSPG5</scope>
</reference>
<reference key="5">
    <citation type="journal article" date="2001" name="J. Biol. Chem.">
        <title>CALEB binds via its acidic stretch to the fibrinogen-like domain of tenascin-C or tenascin-R and its expression is dynamically regulated after optic nerve lesion.</title>
        <authorList>
            <person name="Schumacher S."/>
            <person name="Jung M."/>
            <person name="Noerenberg U."/>
            <person name="Dorner A."/>
            <person name="Chiquet-Ehrismann R."/>
            <person name="Stuermer C.A.O."/>
            <person name="Rathjen F.G."/>
        </authorList>
    </citation>
    <scope>INTERACTION WITH CSPG5</scope>
    <scope>DOMAIN</scope>
</reference>
<organism>
    <name type="scientific">Gallus gallus</name>
    <name type="common">Chicken</name>
    <dbReference type="NCBI Taxonomy" id="9031"/>
    <lineage>
        <taxon>Eukaryota</taxon>
        <taxon>Metazoa</taxon>
        <taxon>Chordata</taxon>
        <taxon>Craniata</taxon>
        <taxon>Vertebrata</taxon>
        <taxon>Euteleostomi</taxon>
        <taxon>Archelosauria</taxon>
        <taxon>Archosauria</taxon>
        <taxon>Dinosauria</taxon>
        <taxon>Saurischia</taxon>
        <taxon>Theropoda</taxon>
        <taxon>Coelurosauria</taxon>
        <taxon>Aves</taxon>
        <taxon>Neognathae</taxon>
        <taxon>Galloanserae</taxon>
        <taxon>Galliformes</taxon>
        <taxon>Phasianidae</taxon>
        <taxon>Phasianinae</taxon>
        <taxon>Gallus</taxon>
    </lineage>
</organism>
<name>TENR_CHICK</name>
<dbReference type="EMBL" id="X64649">
    <property type="protein sequence ID" value="CAA45920.1"/>
    <property type="molecule type" value="mRNA"/>
</dbReference>
<dbReference type="PIR" id="JH0675">
    <property type="entry name" value="JH0675"/>
</dbReference>
<dbReference type="RefSeq" id="NP_990607.2">
    <property type="nucleotide sequence ID" value="NM_205276.3"/>
</dbReference>
<dbReference type="SMR" id="Q00546"/>
<dbReference type="FunCoup" id="Q00546">
    <property type="interactions" value="169"/>
</dbReference>
<dbReference type="STRING" id="9031.ENSGALP00000062658"/>
<dbReference type="GlyCosmos" id="Q00546">
    <property type="glycosylation" value="13 sites, No reported glycans"/>
</dbReference>
<dbReference type="GlyGen" id="Q00546">
    <property type="glycosylation" value="13 sites"/>
</dbReference>
<dbReference type="PaxDb" id="9031-ENSGALP00000042383"/>
<dbReference type="GeneID" id="396213"/>
<dbReference type="KEGG" id="gga:396213"/>
<dbReference type="CTD" id="7143"/>
<dbReference type="VEuPathDB" id="HostDB:geneid_396213"/>
<dbReference type="eggNOG" id="KOG1225">
    <property type="taxonomic scope" value="Eukaryota"/>
</dbReference>
<dbReference type="eggNOG" id="KOG2579">
    <property type="taxonomic scope" value="Eukaryota"/>
</dbReference>
<dbReference type="InParanoid" id="Q00546"/>
<dbReference type="OrthoDB" id="6130531at2759"/>
<dbReference type="PhylomeDB" id="Q00546"/>
<dbReference type="PRO" id="PR:Q00546"/>
<dbReference type="Proteomes" id="UP000000539">
    <property type="component" value="Unassembled WGS sequence"/>
</dbReference>
<dbReference type="GO" id="GO:0005576">
    <property type="term" value="C:extracellular region"/>
    <property type="evidence" value="ECO:0007669"/>
    <property type="project" value="UniProtKB-KW"/>
</dbReference>
<dbReference type="GO" id="GO:0007155">
    <property type="term" value="P:cell adhesion"/>
    <property type="evidence" value="ECO:0007669"/>
    <property type="project" value="UniProtKB-KW"/>
</dbReference>
<dbReference type="CDD" id="cd00063">
    <property type="entry name" value="FN3"/>
    <property type="match status" value="9"/>
</dbReference>
<dbReference type="CDD" id="cd00087">
    <property type="entry name" value="FReD"/>
    <property type="match status" value="1"/>
</dbReference>
<dbReference type="FunFam" id="2.60.40.10:FF:000099">
    <property type="entry name" value="Fibronectin 1"/>
    <property type="match status" value="2"/>
</dbReference>
<dbReference type="FunFam" id="2.10.25.10:FF:000001">
    <property type="entry name" value="Tenascin C"/>
    <property type="match status" value="4"/>
</dbReference>
<dbReference type="FunFam" id="2.60.40.10:FF:000201">
    <property type="entry name" value="Tenascin C"/>
    <property type="match status" value="1"/>
</dbReference>
<dbReference type="FunFam" id="2.60.40.10:FF:000207">
    <property type="entry name" value="Tenascin C"/>
    <property type="match status" value="1"/>
</dbReference>
<dbReference type="FunFam" id="3.90.215.10:FF:000001">
    <property type="entry name" value="Tenascin isoform 1"/>
    <property type="match status" value="1"/>
</dbReference>
<dbReference type="FunFam" id="2.60.40.10:FF:000609">
    <property type="entry name" value="Tenascin R"/>
    <property type="match status" value="1"/>
</dbReference>
<dbReference type="FunFam" id="2.60.40.10:FF:000682">
    <property type="entry name" value="Tenascin R"/>
    <property type="match status" value="1"/>
</dbReference>
<dbReference type="FunFam" id="2.60.40.10:FF:000691">
    <property type="entry name" value="Tenascin R"/>
    <property type="match status" value="1"/>
</dbReference>
<dbReference type="FunFam" id="2.60.40.10:FF:000722">
    <property type="entry name" value="Tenascin R"/>
    <property type="match status" value="1"/>
</dbReference>
<dbReference type="Gene3D" id="3.90.215.10">
    <property type="entry name" value="Gamma Fibrinogen, chain A, domain 1"/>
    <property type="match status" value="1"/>
</dbReference>
<dbReference type="Gene3D" id="2.60.40.10">
    <property type="entry name" value="Immunoglobulins"/>
    <property type="match status" value="9"/>
</dbReference>
<dbReference type="Gene3D" id="2.10.25.10">
    <property type="entry name" value="Laminin"/>
    <property type="match status" value="4"/>
</dbReference>
<dbReference type="InterPro" id="IPR050991">
    <property type="entry name" value="ECM_Regulatory_Proteins"/>
</dbReference>
<dbReference type="InterPro" id="IPR000742">
    <property type="entry name" value="EGF-like_dom"/>
</dbReference>
<dbReference type="InterPro" id="IPR041161">
    <property type="entry name" value="EGF_Tenascin"/>
</dbReference>
<dbReference type="InterPro" id="IPR036056">
    <property type="entry name" value="Fibrinogen-like_C"/>
</dbReference>
<dbReference type="InterPro" id="IPR014716">
    <property type="entry name" value="Fibrinogen_a/b/g_C_1"/>
</dbReference>
<dbReference type="InterPro" id="IPR002181">
    <property type="entry name" value="Fibrinogen_a/b/g_C_dom"/>
</dbReference>
<dbReference type="InterPro" id="IPR003961">
    <property type="entry name" value="FN3_dom"/>
</dbReference>
<dbReference type="InterPro" id="IPR036116">
    <property type="entry name" value="FN3_sf"/>
</dbReference>
<dbReference type="InterPro" id="IPR013783">
    <property type="entry name" value="Ig-like_fold"/>
</dbReference>
<dbReference type="NCBIfam" id="NF040941">
    <property type="entry name" value="GGGWT_bact"/>
    <property type="match status" value="1"/>
</dbReference>
<dbReference type="PANTHER" id="PTHR46708:SF2">
    <property type="entry name" value="FIBRONECTIN TYPE-III DOMAIN-CONTAINING PROTEIN"/>
    <property type="match status" value="1"/>
</dbReference>
<dbReference type="PANTHER" id="PTHR46708">
    <property type="entry name" value="TENASCIN"/>
    <property type="match status" value="1"/>
</dbReference>
<dbReference type="Pfam" id="PF25024">
    <property type="entry name" value="EGF_TEN"/>
    <property type="match status" value="1"/>
</dbReference>
<dbReference type="Pfam" id="PF18720">
    <property type="entry name" value="EGF_Tenascin"/>
    <property type="match status" value="1"/>
</dbReference>
<dbReference type="Pfam" id="PF00147">
    <property type="entry name" value="Fibrinogen_C"/>
    <property type="match status" value="1"/>
</dbReference>
<dbReference type="Pfam" id="PF00041">
    <property type="entry name" value="fn3"/>
    <property type="match status" value="9"/>
</dbReference>
<dbReference type="SMART" id="SM00181">
    <property type="entry name" value="EGF"/>
    <property type="match status" value="4"/>
</dbReference>
<dbReference type="SMART" id="SM00186">
    <property type="entry name" value="FBG"/>
    <property type="match status" value="1"/>
</dbReference>
<dbReference type="SMART" id="SM00060">
    <property type="entry name" value="FN3"/>
    <property type="match status" value="9"/>
</dbReference>
<dbReference type="SUPFAM" id="SSF56496">
    <property type="entry name" value="Fibrinogen C-terminal domain-like"/>
    <property type="match status" value="1"/>
</dbReference>
<dbReference type="SUPFAM" id="SSF49265">
    <property type="entry name" value="Fibronectin type III"/>
    <property type="match status" value="5"/>
</dbReference>
<dbReference type="PROSITE" id="PS00022">
    <property type="entry name" value="EGF_1"/>
    <property type="match status" value="5"/>
</dbReference>
<dbReference type="PROSITE" id="PS01186">
    <property type="entry name" value="EGF_2"/>
    <property type="match status" value="4"/>
</dbReference>
<dbReference type="PROSITE" id="PS51406">
    <property type="entry name" value="FIBRINOGEN_C_2"/>
    <property type="match status" value="1"/>
</dbReference>
<dbReference type="PROSITE" id="PS50853">
    <property type="entry name" value="FN3"/>
    <property type="match status" value="9"/>
</dbReference>
<sequence length="1353" mass="148280">MGTDSENPVLRNVLISFNLLLLGAVLKPFECRLEVTTEPAERPAVDEEGGLANCSPPVKEQPMVFHHIYNINVPVDSCCSSMLRSSAEEVSSEDDRLAEYTEQTSDSESQVTFTHRINLPKQACKCSTSLPSLQELLSRIEMLEREVSMLRDQCNSNCCQENAATGRLDYTLPCSGHGNFSLESCRCICSEGWAGSNCSEPRCPRGCSSRGVCLEGQCVCDNDYGGEDCSQLRCPAGCGSRGLCVDGECICEEGFGGEDCSQPRCPRDCSGRGHCDNGTCVCAEGYAGEDCGWLRCPNACSGRGVCQDGLCICEDGYGGQDCSAVAPPENLRVTGISDGSIELAWDSLGAATEYVVSYQPAGPGGSQLQQRVPGDWSTITITELEPGVAYNVSIYAVISDVLSSPVTTKVTTNLATPQGLKFKTITETTVEVQWEPFSFPFDGWEISFIPKNNEGGVIAQLPSTVTTFNQTGLKPGEEYTVTVVALKDQARSPPASDSISTLIDGPTQILVRDVSDTVAFVEWTPPRARVDAILLKYGLADGEGGRTTFRLQPPLSQYSLQALRPGARYHLAVSALRGANESQPALAQFTTEIDAPKNLRVGSRTPASLELTWDNSEAEAHSYRVVYSTLAGEHYHEVLVPRDTGPTTRATLADLVPGTEYGIGISAVMDSQQSVPATMNARTELDSPRDLLVTASTETSISLSWTKAMGPIDHYRVTFTPASGMASEVTVSRNESQLTLSELEPGTEYTISIIAERGRQQSLEATVDAFTGVRPITQLHFSQLTSSSVNITWSDPSPPADRLVLTYSPRDEEAPQQLALDGTRRHASLTGLRPSTEYLVSLVAVHGAVSSEPVTGSITTGMDAPKDLRVGNITQDSMVIYWSPPVAPFDHYRISYRAAEGRTDSTAIGNDATEYIMRLLQPATKYEIGVKSVRGREESEVASITTYTAMDAPLGVTATNITPTEALLQWNPPLMDVESYVLVLTRHTGETILVDGINQEYQLTNLQPSTTYTVAMYATNGPLTSQTISTNFTTLLDPPTNLTASEVTRRSALLSWVPPVGDIENYILTYRSTDGSRKELIVDAEDTWIRLEGLSETTQYTVRLQAAQNAMRSGFISTTFTTGGRVFANPQDCAQHLMNGDTLSGVYTISINGDLSQRVQVFCDMSTDGGGWIVFQRRQNGLTDFFRKWADYRVGFGNLEDEFWLGLDNIHKITSQGRYELRIDMRDGQEAAYAYYDKFSVGDSRSLYKLRIGDYNGTSGDSLTYHQGRPFSTKDRDNDVAVTNCAMSYKGAWWYKNCHRTNLNGKYGESRHSQGINWYHWKGHEFSIPFVEMKMRPYNHRNISGRKRRSLQL</sequence>
<accession>Q00546</accession>
<protein>
    <recommendedName>
        <fullName>Tenascin-R</fullName>
        <shortName>TN-R</shortName>
    </recommendedName>
    <alternativeName>
        <fullName>Restrictin</fullName>
    </alternativeName>
</protein>
<gene>
    <name type="primary">TNR</name>
</gene>
<evidence type="ECO:0000255" key="1"/>
<evidence type="ECO:0000255" key="2">
    <source>
        <dbReference type="PROSITE-ProRule" id="PRU00316"/>
    </source>
</evidence>
<evidence type="ECO:0000255" key="3">
    <source>
        <dbReference type="PROSITE-ProRule" id="PRU00739"/>
    </source>
</evidence>
<evidence type="ECO:0000269" key="4">
    <source>
    </source>
</evidence>
<evidence type="ECO:0000269" key="5">
    <source>
    </source>
</evidence>
<evidence type="ECO:0000269" key="6">
    <source>
    </source>
</evidence>
<evidence type="ECO:0000269" key="7">
    <source>
    </source>
</evidence>
<evidence type="ECO:0000269" key="8">
    <source>
    </source>
</evidence>
<evidence type="ECO:0000303" key="9">
    <source>
    </source>
</evidence>
<evidence type="ECO:0000305" key="10"/>